<accession>P22545</accession>
<comment type="function">
    <text evidence="3 6 7">Binds to the human erythrocyte Duffy blood group determinant (ACKR1) (PubMed:10570199, PubMed:28800732, PubMed:8879225). Binds to the rhesus macaque erythrocyte Duffy blood group determinant (ACKR1) (PubMed:8879225).</text>
</comment>
<comment type="subunit">
    <text evidence="7">Interacts (via region II) with human ACKR1 (via N-terminal extracellular domain) (PubMed:8879225). Interacts (via region II) with rhesus macaque ACKR1 (via N-terminal extracellular domain) (PubMed:8879225).</text>
</comment>
<comment type="subcellular location">
    <subcellularLocation>
        <location evidence="11">Cell membrane</location>
        <topology evidence="1">Single-pass type I membrane protein</topology>
    </subcellularLocation>
    <subcellularLocation>
        <location evidence="5">Cytoplasmic vesicle</location>
        <location evidence="5">Secretory vesicle</location>
        <location evidence="5">Microneme</location>
    </subcellularLocation>
</comment>
<comment type="developmental stage">
    <text evidence="5">Expressed in late schizonts (at protein level) (PubMed:2170017). Expressed in free merozoites (at protein level) (PubMed:2170017).</text>
</comment>
<name>PVDA_PLAKN</name>
<proteinExistence type="evidence at protein level"/>
<feature type="signal peptide" evidence="1">
    <location>
        <begin position="1"/>
        <end position="21"/>
    </location>
</feature>
<feature type="chain" id="PRO_0000024618" description="Duffy receptor alpha form">
    <location>
        <begin position="22"/>
        <end position="1073"/>
    </location>
</feature>
<feature type="topological domain" description="Extracellular" evidence="1">
    <location>
        <begin position="22"/>
        <end position="1007"/>
    </location>
</feature>
<feature type="transmembrane region" description="Helical" evidence="1">
    <location>
        <begin position="1008"/>
        <end position="1029"/>
    </location>
</feature>
<feature type="topological domain" description="Cytoplasmic" evidence="1">
    <location>
        <begin position="1030"/>
        <end position="1073"/>
    </location>
</feature>
<feature type="region of interest" description="Disordered" evidence="2">
    <location>
        <begin position="517"/>
        <end position="915"/>
    </location>
</feature>
<feature type="compositionally biased region" description="Polar residues" evidence="2">
    <location>
        <begin position="528"/>
        <end position="543"/>
    </location>
</feature>
<feature type="compositionally biased region" description="Basic and acidic residues" evidence="2">
    <location>
        <begin position="546"/>
        <end position="561"/>
    </location>
</feature>
<feature type="compositionally biased region" description="Polar residues" evidence="2">
    <location>
        <begin position="562"/>
        <end position="576"/>
    </location>
</feature>
<feature type="compositionally biased region" description="Basic and acidic residues" evidence="2">
    <location>
        <begin position="675"/>
        <end position="710"/>
    </location>
</feature>
<feature type="compositionally biased region" description="Basic and acidic residues" evidence="2">
    <location>
        <begin position="717"/>
        <end position="734"/>
    </location>
</feature>
<feature type="compositionally biased region" description="Polar residues" evidence="2">
    <location>
        <begin position="736"/>
        <end position="766"/>
    </location>
</feature>
<feature type="compositionally biased region" description="Basic and acidic residues" evidence="2">
    <location>
        <begin position="799"/>
        <end position="810"/>
    </location>
</feature>
<feature type="compositionally biased region" description="Low complexity" evidence="2">
    <location>
        <begin position="821"/>
        <end position="843"/>
    </location>
</feature>
<feature type="compositionally biased region" description="Low complexity" evidence="2">
    <location>
        <begin position="851"/>
        <end position="864"/>
    </location>
</feature>
<feature type="compositionally biased region" description="Basic and acidic residues" evidence="2">
    <location>
        <begin position="867"/>
        <end position="891"/>
    </location>
</feature>
<feature type="compositionally biased region" description="Polar residues" evidence="2">
    <location>
        <begin position="893"/>
        <end position="909"/>
    </location>
</feature>
<feature type="glycosylation site" description="N-linked (GlcNAc...) asparagine" evidence="1">
    <location>
        <position position="134"/>
    </location>
</feature>
<feature type="glycosylation site" description="N-linked (GlcNAc...) asparagine" evidence="1">
    <location>
        <position position="179"/>
    </location>
</feature>
<feature type="glycosylation site" description="N-linked (GlcNAc...) asparagine" evidence="1">
    <location>
        <position position="202"/>
    </location>
</feature>
<feature type="glycosylation site" description="N-linked (GlcNAc...) asparagine" evidence="1">
    <location>
        <position position="252"/>
    </location>
</feature>
<feature type="glycosylation site" description="N-linked (GlcNAc...) asparagine" evidence="1">
    <location>
        <position position="348"/>
    </location>
</feature>
<feature type="glycosylation site" description="N-linked (GlcNAc...) asparagine" evidence="1">
    <location>
        <position position="679"/>
    </location>
</feature>
<feature type="glycosylation site" description="N-linked (GlcNAc...) asparagine" evidence="1">
    <location>
        <position position="746"/>
    </location>
</feature>
<feature type="glycosylation site" description="N-linked (GlcNAc...) asparagine" evidence="1">
    <location>
        <position position="779"/>
    </location>
</feature>
<feature type="glycosylation site" description="N-linked (GlcNAc...) asparagine" evidence="1">
    <location>
        <position position="788"/>
    </location>
</feature>
<feature type="disulfide bond" evidence="4 13">
    <location>
        <begin position="214"/>
        <end position="243"/>
    </location>
</feature>
<feature type="disulfide bond" evidence="4 13">
    <location>
        <begin position="227"/>
        <end position="234"/>
    </location>
</feature>
<feature type="disulfide bond" evidence="4 13">
    <location>
        <begin position="297"/>
        <end position="374"/>
    </location>
</feature>
<feature type="disulfide bond" evidence="4 13">
    <location>
        <begin position="412"/>
        <end position="429"/>
    </location>
</feature>
<feature type="disulfide bond" evidence="4 13">
    <location>
        <begin position="424"/>
        <end position="504"/>
    </location>
</feature>
<feature type="disulfide bond" evidence="4 13">
    <location>
        <begin position="433"/>
        <end position="502"/>
    </location>
</feature>
<feature type="helix" evidence="14">
    <location>
        <begin position="237"/>
        <end position="240"/>
    </location>
</feature>
<feature type="helix" evidence="14">
    <location>
        <begin position="246"/>
        <end position="248"/>
    </location>
</feature>
<feature type="helix" evidence="14">
    <location>
        <begin position="263"/>
        <end position="287"/>
    </location>
</feature>
<feature type="turn" evidence="14">
    <location>
        <begin position="288"/>
        <end position="290"/>
    </location>
</feature>
<feature type="helix" evidence="14">
    <location>
        <begin position="294"/>
        <end position="312"/>
    </location>
</feature>
<feature type="helix" evidence="14">
    <location>
        <begin position="327"/>
        <end position="331"/>
    </location>
</feature>
<feature type="turn" evidence="14">
    <location>
        <begin position="332"/>
        <end position="335"/>
    </location>
</feature>
<feature type="strand" evidence="14">
    <location>
        <begin position="338"/>
        <end position="340"/>
    </location>
</feature>
<feature type="helix" evidence="14">
    <location>
        <begin position="344"/>
        <end position="349"/>
    </location>
</feature>
<feature type="helix" evidence="14">
    <location>
        <begin position="352"/>
        <end position="358"/>
    </location>
</feature>
<feature type="helix" evidence="14">
    <location>
        <begin position="360"/>
        <end position="366"/>
    </location>
</feature>
<feature type="helix" evidence="14">
    <location>
        <begin position="367"/>
        <end position="369"/>
    </location>
</feature>
<feature type="helix" evidence="14">
    <location>
        <begin position="376"/>
        <end position="380"/>
    </location>
</feature>
<feature type="helix" evidence="14">
    <location>
        <begin position="385"/>
        <end position="410"/>
    </location>
</feature>
<feature type="helix" evidence="14">
    <location>
        <begin position="420"/>
        <end position="425"/>
    </location>
</feature>
<feature type="helix" evidence="14">
    <location>
        <begin position="427"/>
        <end position="460"/>
    </location>
</feature>
<feature type="helix" evidence="14">
    <location>
        <begin position="471"/>
        <end position="478"/>
    </location>
</feature>
<feature type="strand" evidence="14">
    <location>
        <begin position="479"/>
        <end position="481"/>
    </location>
</feature>
<feature type="helix" evidence="14">
    <location>
        <begin position="484"/>
        <end position="491"/>
    </location>
</feature>
<feature type="helix" evidence="14">
    <location>
        <begin position="496"/>
        <end position="501"/>
    </location>
</feature>
<sequence>MEGKKKRPLFFLLVLLLSHKANNVLFERMNGILLLECENEYVKNENGYKLATGHHYMDNDQIEQWLQGTDRSRRVKIEENVKYKYNVEELNTKYEQMKAPRINRILKESTYEAQNVADNNYIDDKANGEHKTDNKTNKGEGARNMVMLDYDISGSGQPDGIIDNVVELGTEDEGNFLENSSKGGDHPYRMNRKERMSNGVINQTFLQNNVMDKCNDKRKRGERDWDCPAEKDICISVRRYQLCMKGLTNLVNNTRTHSHNDITFLKLNLKRKLMYDAAVEGDLLLKKNNYQYNKEFCKDIRWGLGDFGDIIMGTNMEGIGYSQVVENNLRQVFGTDEKAKQDRKQWWNESKEHIWRAMMFSIRSRLKEKFVWICKKDVTLKVEPQIYRWIREWGRDYMSKLPKEQGKLNEKCASKLYYNNMAICMLPLCHDACKSYDQWITRKKKQWDVLSTKFSSVKKTQKIGTENIATAYDILKQELNGFKEATFENEINKRDNLYNHLCPCVVEEARKNTQENVKNVGSGVESKAASSNPITEAVKSSSGEGKVQEDSAHKSVNKGEGKSSTNEADPGSQSGAPASRSVDEKAGVPALSAGQGHDKVPPAEAAATESAVLHSADKTPNTVTEENKEGTQMDGAAGGDGKAPGPTVSSDVPSVGGKDSGPSTSASHALAGENGEVHNGTDTEPKEDGEKADPQKDIEVKGKQDTDDRSQGSLGPHTDERATLGETHMEKDTETAGGSTLTPEQNVSVASDNGNVPGSGNKQNEGATALSGAESLKSNESVHKTIDNTTHGLENKNGGNEKDFQKHDFMNNDMLNDQASSDHTSSDQTSSDHTSSDQTSSDHTSSDHTSSDQTSSDQTSSDQTIDTEGHHRDNVRNPEIKSSEDMSKGDFMRNSNSNELYSHNNLNNRKLNRDQYEHRDVKATREKIILMSEVNKCNNRASVKYCNTIEDRMLSSTCSRERRKNLCCSISDFCLNYFELYSYEFYNCMKKEFEDPSYECFTKGSSTGIVYFATGGAFLIILLLFASWNAASNDYEEEATFDEFVEYSDDIHRTPLMPNDIEHMQQFTPLDYS</sequence>
<dbReference type="EMBL" id="M90466">
    <property type="protein sequence ID" value="AAA29602.1"/>
    <property type="molecule type" value="Genomic_DNA"/>
</dbReference>
<dbReference type="EMBL" id="M68517">
    <property type="protein sequence ID" value="AAA29590.1"/>
    <property type="molecule type" value="mRNA"/>
</dbReference>
<dbReference type="EMBL" id="M68518">
    <property type="protein sequence ID" value="AAA29591.1"/>
    <property type="molecule type" value="Genomic_DNA"/>
</dbReference>
<dbReference type="PIR" id="A35970">
    <property type="entry name" value="A35970"/>
</dbReference>
<dbReference type="PDB" id="5X6N">
    <property type="method" value="X-ray"/>
    <property type="resolution" value="3.00 A"/>
    <property type="chains" value="A=200-536"/>
</dbReference>
<dbReference type="PDBsum" id="5X6N"/>
<dbReference type="SMR" id="P22545"/>
<dbReference type="VEuPathDB" id="PlasmoDB:PKA1H_060029200"/>
<dbReference type="VEuPathDB" id="PlasmoDB:PKNH_0623500"/>
<dbReference type="VEuPathDB" id="PlasmoDB:PKNOH_S03338900"/>
<dbReference type="eggNOG" id="ENOG502SZ6Z">
    <property type="taxonomic scope" value="Eukaryota"/>
</dbReference>
<dbReference type="GO" id="GO:0020009">
    <property type="term" value="C:microneme"/>
    <property type="evidence" value="ECO:0007669"/>
    <property type="project" value="UniProtKB-SubCell"/>
</dbReference>
<dbReference type="GO" id="GO:0005886">
    <property type="term" value="C:plasma membrane"/>
    <property type="evidence" value="ECO:0007669"/>
    <property type="project" value="UniProtKB-SubCell"/>
</dbReference>
<dbReference type="GO" id="GO:0046789">
    <property type="term" value="F:host cell surface receptor binding"/>
    <property type="evidence" value="ECO:0007669"/>
    <property type="project" value="InterPro"/>
</dbReference>
<dbReference type="FunFam" id="1.10.1740.170:FF:000001">
    <property type="entry name" value="Erythrocyte binding antigen"/>
    <property type="match status" value="1"/>
</dbReference>
<dbReference type="Gene3D" id="1.20.58.830">
    <property type="match status" value="1"/>
</dbReference>
<dbReference type="Gene3D" id="1.20.1310.20">
    <property type="entry name" value="Duffy-antigen binding domain"/>
    <property type="match status" value="1"/>
</dbReference>
<dbReference type="Gene3D" id="1.10.1740.170">
    <property type="entry name" value="Erythrocyte binding antigen 175 region VI"/>
    <property type="match status" value="1"/>
</dbReference>
<dbReference type="InterPro" id="IPR042202">
    <property type="entry name" value="Duffy-ag-bd_sf"/>
</dbReference>
<dbReference type="InterPro" id="IPR008602">
    <property type="entry name" value="Duffy-antigen-binding"/>
</dbReference>
<dbReference type="InterPro" id="IPR021032">
    <property type="entry name" value="Duffy-antigen-binding_N"/>
</dbReference>
<dbReference type="InterPro" id="IPR021620">
    <property type="entry name" value="EBA-175_C"/>
</dbReference>
<dbReference type="InterPro" id="IPR043057">
    <property type="entry name" value="EBA-175_C_sf"/>
</dbReference>
<dbReference type="Pfam" id="PF05424">
    <property type="entry name" value="Duffy_binding"/>
    <property type="match status" value="1"/>
</dbReference>
<dbReference type="Pfam" id="PF12377">
    <property type="entry name" value="DuffyBP_N"/>
    <property type="match status" value="1"/>
</dbReference>
<dbReference type="Pfam" id="PF11556">
    <property type="entry name" value="EBA-175_VI"/>
    <property type="match status" value="1"/>
</dbReference>
<dbReference type="SUPFAM" id="SSF140924">
    <property type="entry name" value="Duffy binding domain-like"/>
    <property type="match status" value="1"/>
</dbReference>
<keyword id="KW-0002">3D-structure</keyword>
<keyword id="KW-1003">Cell membrane</keyword>
<keyword id="KW-0968">Cytoplasmic vesicle</keyword>
<keyword id="KW-1015">Disulfide bond</keyword>
<keyword id="KW-0325">Glycoprotein</keyword>
<keyword id="KW-0461">Malaria</keyword>
<keyword id="KW-0472">Membrane</keyword>
<keyword id="KW-0675">Receptor</keyword>
<keyword id="KW-0732">Signal</keyword>
<keyword id="KW-0812">Transmembrane</keyword>
<keyword id="KW-1133">Transmembrane helix</keyword>
<reference key="1">
    <citation type="journal article" date="1992" name="Proc. Natl. Acad. Sci. U.S.A.">
        <title>A family of erythrocyte binding proteins of malaria parasites.</title>
        <authorList>
            <person name="Adams J.H."/>
            <person name="Sim B.K."/>
            <person name="Dolan S.A."/>
            <person name="Fang X."/>
            <person name="Kaslow D.C."/>
            <person name="Miller L.H."/>
        </authorList>
    </citation>
    <scope>NUCLEOTIDE SEQUENCE [GENOMIC DNA]</scope>
</reference>
<reference key="2">
    <citation type="journal article" date="1990" name="Cell">
        <title>The Duffy receptor family of Plasmodium knowlesi is located within the micronemes of invasive malaria merozoites.</title>
        <authorList>
            <person name="Adams J.H."/>
            <person name="Hudson D.E."/>
            <person name="Torii M."/>
            <person name="Ward G.E."/>
            <person name="Wellems T.E."/>
            <person name="Aikawa M."/>
            <person name="Miller L.H."/>
        </authorList>
    </citation>
    <scope>NUCLEOTIDE SEQUENCE [GENOMIC DNA / MRNA] OF 296-1073</scope>
    <scope>SUBCELLULAR LOCATION</scope>
    <scope>DEVELOPMENTAL STAGE</scope>
</reference>
<reference key="3">
    <citation type="journal article" date="1996" name="J. Exp. Med.">
        <title>The domain on the Duffy blood group antigen for binding Plasmodium vivax and P. knowlesi malarial parasites to erythrocytes.</title>
        <authorList>
            <person name="Chitnis C.E."/>
            <person name="Chaudhuri A."/>
            <person name="Horuk R."/>
            <person name="Pogo A.O."/>
            <person name="Miller L.H."/>
        </authorList>
    </citation>
    <scope>FUNCTION</scope>
    <scope>INTERACTION WITH MACAQUE AND HUMAN ACKR1</scope>
</reference>
<reference key="4">
    <citation type="journal article" date="1999" name="Proc. Natl. Acad. Sci. U.S.A.">
        <title>Mapping regions containing binding residues within functional domains of Plasmodium vivax and Plasmodium knowlesi erythrocyte-binding proteins.</title>
        <authorList>
            <person name="Ranjan A."/>
            <person name="Chitnis C.E."/>
        </authorList>
    </citation>
    <scope>FUNCTION</scope>
</reference>
<reference key="5">
    <citation type="journal article" date="2017" name="Malar. J.">
        <title>The Duffy binding protein (PkDBPalphaII) of Plasmodium knowlesi from Peninsular Malaysia and Malaysian Borneo show different binding activity level to human erythrocytes.</title>
        <authorList>
            <person name="Lim K.L."/>
            <person name="Amir A."/>
            <person name="Lau Y.L."/>
            <person name="Fong M.Y."/>
        </authorList>
    </citation>
    <scope>FUNCTION</scope>
    <scope>SUBCELLULAR LOCATION</scope>
</reference>
<reference evidence="12" key="6">
    <citation type="journal article" date="2006" name="Nature">
        <title>Structural basis for Duffy recognition by the malaria parasite Duffy-binding-like domain.</title>
        <authorList>
            <person name="Singh S.K."/>
            <person name="Hora R."/>
            <person name="Belrhali H."/>
            <person name="Chitnis C.E."/>
            <person name="Sharma A."/>
        </authorList>
    </citation>
    <scope>X-RAY CRYSTALLOGRAPHY (3.0 ANGSTROMS) OF 200-536</scope>
    <scope>DISULFIDE BONDS</scope>
</reference>
<evidence type="ECO:0000255" key="1"/>
<evidence type="ECO:0000256" key="2">
    <source>
        <dbReference type="SAM" id="MobiDB-lite"/>
    </source>
</evidence>
<evidence type="ECO:0000269" key="3">
    <source>
    </source>
</evidence>
<evidence type="ECO:0000269" key="4">
    <source>
    </source>
</evidence>
<evidence type="ECO:0000269" key="5">
    <source>
    </source>
</evidence>
<evidence type="ECO:0000269" key="6">
    <source>
    </source>
</evidence>
<evidence type="ECO:0000269" key="7">
    <source>
    </source>
</evidence>
<evidence type="ECO:0000303" key="8">
    <source>
    </source>
</evidence>
<evidence type="ECO:0000303" key="9">
    <source>
    </source>
</evidence>
<evidence type="ECO:0000305" key="10"/>
<evidence type="ECO:0000305" key="11">
    <source>
    </source>
</evidence>
<evidence type="ECO:0000312" key="12">
    <source>
        <dbReference type="PDB" id="5X6N"/>
    </source>
</evidence>
<evidence type="ECO:0007744" key="13">
    <source>
        <dbReference type="PDB" id="5X6N"/>
    </source>
</evidence>
<evidence type="ECO:0007829" key="14">
    <source>
        <dbReference type="PDB" id="5X6N"/>
    </source>
</evidence>
<protein>
    <recommendedName>
        <fullName>Duffy receptor alpha form</fullName>
    </recommendedName>
    <alternativeName>
        <fullName evidence="8">Erythrocyte-binding protein</fullName>
    </alternativeName>
    <alternativeName>
        <fullName evidence="9">PkDBPalphaII</fullName>
    </alternativeName>
</protein>
<organism>
    <name type="scientific">Plasmodium knowlesi</name>
    <dbReference type="NCBI Taxonomy" id="5850"/>
    <lineage>
        <taxon>Eukaryota</taxon>
        <taxon>Sar</taxon>
        <taxon>Alveolata</taxon>
        <taxon>Apicomplexa</taxon>
        <taxon>Aconoidasida</taxon>
        <taxon>Haemosporida</taxon>
        <taxon>Plasmodiidae</taxon>
        <taxon>Plasmodium</taxon>
        <taxon>Plasmodium (Plasmodium)</taxon>
    </lineage>
</organism>
<gene>
    <name evidence="10" type="primary">DBPalpha</name>
</gene>